<accession>Q2LVX4</accession>
<name>HYPA_SYNAS</name>
<feature type="chain" id="PRO_1000023860" description="Hydrogenase maturation factor HypA">
    <location>
        <begin position="1"/>
        <end position="114"/>
    </location>
</feature>
<feature type="binding site" evidence="1">
    <location>
        <position position="2"/>
    </location>
    <ligand>
        <name>Ni(2+)</name>
        <dbReference type="ChEBI" id="CHEBI:49786"/>
    </ligand>
</feature>
<feature type="binding site" evidence="1">
    <location>
        <position position="73"/>
    </location>
    <ligand>
        <name>Zn(2+)</name>
        <dbReference type="ChEBI" id="CHEBI:29105"/>
    </ligand>
</feature>
<feature type="binding site" evidence="1">
    <location>
        <position position="76"/>
    </location>
    <ligand>
        <name>Zn(2+)</name>
        <dbReference type="ChEBI" id="CHEBI:29105"/>
    </ligand>
</feature>
<feature type="binding site" evidence="1">
    <location>
        <position position="89"/>
    </location>
    <ligand>
        <name>Zn(2+)</name>
        <dbReference type="ChEBI" id="CHEBI:29105"/>
    </ligand>
</feature>
<feature type="binding site" evidence="1">
    <location>
        <position position="92"/>
    </location>
    <ligand>
        <name>Zn(2+)</name>
        <dbReference type="ChEBI" id="CHEBI:29105"/>
    </ligand>
</feature>
<evidence type="ECO:0000255" key="1">
    <source>
        <dbReference type="HAMAP-Rule" id="MF_00213"/>
    </source>
</evidence>
<reference key="1">
    <citation type="journal article" date="2007" name="Proc. Natl. Acad. Sci. U.S.A.">
        <title>The genome of Syntrophus aciditrophicus: life at the thermodynamic limit of microbial growth.</title>
        <authorList>
            <person name="McInerney M.J."/>
            <person name="Rohlin L."/>
            <person name="Mouttaki H."/>
            <person name="Kim U."/>
            <person name="Krupp R.S."/>
            <person name="Rios-Hernandez L."/>
            <person name="Sieber J."/>
            <person name="Struchtemeyer C.G."/>
            <person name="Bhattacharyya A."/>
            <person name="Campbell J.W."/>
            <person name="Gunsalus R.P."/>
        </authorList>
    </citation>
    <scope>NUCLEOTIDE SEQUENCE [LARGE SCALE GENOMIC DNA]</scope>
    <source>
        <strain>SB</strain>
    </source>
</reference>
<organism>
    <name type="scientific">Syntrophus aciditrophicus (strain SB)</name>
    <dbReference type="NCBI Taxonomy" id="56780"/>
    <lineage>
        <taxon>Bacteria</taxon>
        <taxon>Pseudomonadati</taxon>
        <taxon>Thermodesulfobacteriota</taxon>
        <taxon>Syntrophia</taxon>
        <taxon>Syntrophales</taxon>
        <taxon>Syntrophaceae</taxon>
        <taxon>Syntrophus</taxon>
    </lineage>
</organism>
<protein>
    <recommendedName>
        <fullName evidence="1">Hydrogenase maturation factor HypA</fullName>
    </recommendedName>
</protein>
<keyword id="KW-0479">Metal-binding</keyword>
<keyword id="KW-0533">Nickel</keyword>
<keyword id="KW-1185">Reference proteome</keyword>
<keyword id="KW-0862">Zinc</keyword>
<gene>
    <name evidence="1" type="primary">hypA</name>
    <name type="ordered locus">SYNAS_23590</name>
    <name type="ORF">SYN_00595</name>
</gene>
<sequence length="114" mass="12600">MHELSLVSSILDIIEDYAAQDGFRRVNNLRLSCGRLSGVDLQCLRFAFEVLSRETRSEGATLEIDFLPIVISCLNCGEDTEVEYVEASCPECGSENVLLAGGTEELRLLELDVD</sequence>
<proteinExistence type="inferred from homology"/>
<dbReference type="EMBL" id="CP000252">
    <property type="protein sequence ID" value="ABC78237.1"/>
    <property type="molecule type" value="Genomic_DNA"/>
</dbReference>
<dbReference type="RefSeq" id="WP_011418257.1">
    <property type="nucleotide sequence ID" value="NC_007759.1"/>
</dbReference>
<dbReference type="SMR" id="Q2LVX4"/>
<dbReference type="FunCoup" id="Q2LVX4">
    <property type="interactions" value="45"/>
</dbReference>
<dbReference type="STRING" id="56780.SYN_00595"/>
<dbReference type="KEGG" id="sat:SYN_00595"/>
<dbReference type="eggNOG" id="COG0375">
    <property type="taxonomic scope" value="Bacteria"/>
</dbReference>
<dbReference type="HOGENOM" id="CLU_126929_0_0_7"/>
<dbReference type="InParanoid" id="Q2LVX4"/>
<dbReference type="OrthoDB" id="9800361at2"/>
<dbReference type="Proteomes" id="UP000001933">
    <property type="component" value="Chromosome"/>
</dbReference>
<dbReference type="GO" id="GO:0016151">
    <property type="term" value="F:nickel cation binding"/>
    <property type="evidence" value="ECO:0007669"/>
    <property type="project" value="UniProtKB-UniRule"/>
</dbReference>
<dbReference type="GO" id="GO:0008270">
    <property type="term" value="F:zinc ion binding"/>
    <property type="evidence" value="ECO:0007669"/>
    <property type="project" value="UniProtKB-UniRule"/>
</dbReference>
<dbReference type="GO" id="GO:0051604">
    <property type="term" value="P:protein maturation"/>
    <property type="evidence" value="ECO:0007669"/>
    <property type="project" value="InterPro"/>
</dbReference>
<dbReference type="GO" id="GO:0036211">
    <property type="term" value="P:protein modification process"/>
    <property type="evidence" value="ECO:0007669"/>
    <property type="project" value="UniProtKB-UniRule"/>
</dbReference>
<dbReference type="Gene3D" id="3.30.2320.80">
    <property type="match status" value="1"/>
</dbReference>
<dbReference type="HAMAP" id="MF_00213">
    <property type="entry name" value="HypA_HybF"/>
    <property type="match status" value="1"/>
</dbReference>
<dbReference type="InterPro" id="IPR020538">
    <property type="entry name" value="Hydgase_Ni_incorp_HypA/HybF_CS"/>
</dbReference>
<dbReference type="InterPro" id="IPR000688">
    <property type="entry name" value="HypA/HybF"/>
</dbReference>
<dbReference type="NCBIfam" id="TIGR00100">
    <property type="entry name" value="hypA"/>
    <property type="match status" value="1"/>
</dbReference>
<dbReference type="PANTHER" id="PTHR34535">
    <property type="entry name" value="HYDROGENASE MATURATION FACTOR HYPA"/>
    <property type="match status" value="1"/>
</dbReference>
<dbReference type="PANTHER" id="PTHR34535:SF3">
    <property type="entry name" value="HYDROGENASE MATURATION FACTOR HYPA"/>
    <property type="match status" value="1"/>
</dbReference>
<dbReference type="Pfam" id="PF01155">
    <property type="entry name" value="HypA"/>
    <property type="match status" value="1"/>
</dbReference>
<dbReference type="PIRSF" id="PIRSF004761">
    <property type="entry name" value="Hydrgn_mat_HypA"/>
    <property type="match status" value="1"/>
</dbReference>
<dbReference type="PROSITE" id="PS01249">
    <property type="entry name" value="HYPA"/>
    <property type="match status" value="1"/>
</dbReference>
<comment type="function">
    <text evidence="1">Involved in the maturation of [NiFe] hydrogenases. Required for nickel insertion into the metal center of the hydrogenase.</text>
</comment>
<comment type="similarity">
    <text evidence="1">Belongs to the HypA/HybF family.</text>
</comment>